<organism>
    <name type="scientific">Escherichia coli O8 (strain IAI1)</name>
    <dbReference type="NCBI Taxonomy" id="585034"/>
    <lineage>
        <taxon>Bacteria</taxon>
        <taxon>Pseudomonadati</taxon>
        <taxon>Pseudomonadota</taxon>
        <taxon>Gammaproteobacteria</taxon>
        <taxon>Enterobacterales</taxon>
        <taxon>Enterobacteriaceae</taxon>
        <taxon>Escherichia</taxon>
    </lineage>
</organism>
<accession>B7M340</accession>
<reference key="1">
    <citation type="journal article" date="2009" name="PLoS Genet.">
        <title>Organised genome dynamics in the Escherichia coli species results in highly diverse adaptive paths.</title>
        <authorList>
            <person name="Touchon M."/>
            <person name="Hoede C."/>
            <person name="Tenaillon O."/>
            <person name="Barbe V."/>
            <person name="Baeriswyl S."/>
            <person name="Bidet P."/>
            <person name="Bingen E."/>
            <person name="Bonacorsi S."/>
            <person name="Bouchier C."/>
            <person name="Bouvet O."/>
            <person name="Calteau A."/>
            <person name="Chiapello H."/>
            <person name="Clermont O."/>
            <person name="Cruveiller S."/>
            <person name="Danchin A."/>
            <person name="Diard M."/>
            <person name="Dossat C."/>
            <person name="Karoui M.E."/>
            <person name="Frapy E."/>
            <person name="Garry L."/>
            <person name="Ghigo J.M."/>
            <person name="Gilles A.M."/>
            <person name="Johnson J."/>
            <person name="Le Bouguenec C."/>
            <person name="Lescat M."/>
            <person name="Mangenot S."/>
            <person name="Martinez-Jehanne V."/>
            <person name="Matic I."/>
            <person name="Nassif X."/>
            <person name="Oztas S."/>
            <person name="Petit M.A."/>
            <person name="Pichon C."/>
            <person name="Rouy Z."/>
            <person name="Ruf C.S."/>
            <person name="Schneider D."/>
            <person name="Tourret J."/>
            <person name="Vacherie B."/>
            <person name="Vallenet D."/>
            <person name="Medigue C."/>
            <person name="Rocha E.P.C."/>
            <person name="Denamur E."/>
        </authorList>
    </citation>
    <scope>NUCLEOTIDE SEQUENCE [LARGE SCALE GENOMIC DNA]</scope>
    <source>
        <strain>IAI1</strain>
    </source>
</reference>
<dbReference type="EMBL" id="CU928160">
    <property type="protein sequence ID" value="CAQ98832.1"/>
    <property type="molecule type" value="Genomic_DNA"/>
</dbReference>
<dbReference type="SMR" id="B7M340"/>
<dbReference type="KEGG" id="ecr:ECIAI1_1979"/>
<dbReference type="HOGENOM" id="CLU_144160_0_0_6"/>
<dbReference type="GO" id="GO:0005737">
    <property type="term" value="C:cytoplasm"/>
    <property type="evidence" value="ECO:0007669"/>
    <property type="project" value="UniProtKB-SubCell"/>
</dbReference>
<dbReference type="GO" id="GO:0003677">
    <property type="term" value="F:DNA binding"/>
    <property type="evidence" value="ECO:0007669"/>
    <property type="project" value="UniProtKB-UniRule"/>
</dbReference>
<dbReference type="GO" id="GO:0044780">
    <property type="term" value="P:bacterial-type flagellum assembly"/>
    <property type="evidence" value="ECO:0007669"/>
    <property type="project" value="InterPro"/>
</dbReference>
<dbReference type="GO" id="GO:0045893">
    <property type="term" value="P:positive regulation of DNA-templated transcription"/>
    <property type="evidence" value="ECO:0007669"/>
    <property type="project" value="InterPro"/>
</dbReference>
<dbReference type="GO" id="GO:1902208">
    <property type="term" value="P:regulation of bacterial-type flagellum assembly"/>
    <property type="evidence" value="ECO:0007669"/>
    <property type="project" value="UniProtKB-UniRule"/>
</dbReference>
<dbReference type="FunFam" id="1.10.4000.10:FF:000001">
    <property type="entry name" value="Flagellar transcriptional regulator FlhD"/>
    <property type="match status" value="1"/>
</dbReference>
<dbReference type="Gene3D" id="1.10.4000.10">
    <property type="entry name" value="Flagellar transcriptional activator FlhD"/>
    <property type="match status" value="1"/>
</dbReference>
<dbReference type="HAMAP" id="MF_00725">
    <property type="entry name" value="FlhD"/>
    <property type="match status" value="1"/>
</dbReference>
<dbReference type="InterPro" id="IPR023559">
    <property type="entry name" value="Flagellar_FlhD"/>
</dbReference>
<dbReference type="InterPro" id="IPR036194">
    <property type="entry name" value="FlhD_sf"/>
</dbReference>
<dbReference type="NCBIfam" id="NF002783">
    <property type="entry name" value="PRK02909.1-1"/>
    <property type="match status" value="1"/>
</dbReference>
<dbReference type="Pfam" id="PF05247">
    <property type="entry name" value="FlhD"/>
    <property type="match status" value="1"/>
</dbReference>
<dbReference type="SUPFAM" id="SSF63592">
    <property type="entry name" value="Flagellar transcriptional activator FlhD"/>
    <property type="match status" value="1"/>
</dbReference>
<protein>
    <recommendedName>
        <fullName evidence="1">Flagellar transcriptional regulator FlhD</fullName>
    </recommendedName>
</protein>
<comment type="function">
    <text evidence="1">Functions in complex with FlhC as a master transcriptional regulator that regulates transcription of several flagellar and non-flagellar operons by binding to their promoter region. Activates expression of class 2 flagellar genes, including fliA, which is a flagellum-specific sigma factor that turns on the class 3 genes. Also regulates genes whose products function in a variety of physiological pathways.</text>
</comment>
<comment type="subunit">
    <text evidence="1">Homodimer; disulfide-linked. Forms a heterohexamer composed of two FlhC and four FlhD subunits. Each FlhC binds a FlhD dimer, forming a heterotrimer, and a hexamer assembles by dimerization of two heterotrimers.</text>
</comment>
<comment type="subcellular location">
    <subcellularLocation>
        <location evidence="1">Cytoplasm</location>
    </subcellularLocation>
</comment>
<comment type="domain">
    <text evidence="1">The C-terminal region contains a putative helix-turn-helix (HTH) motif, suggesting that this region may bind DNA.</text>
</comment>
<comment type="similarity">
    <text evidence="1">Belongs to the FlhD family.</text>
</comment>
<keyword id="KW-0010">Activator</keyword>
<keyword id="KW-1005">Bacterial flagellum biogenesis</keyword>
<keyword id="KW-0963">Cytoplasm</keyword>
<keyword id="KW-1015">Disulfide bond</keyword>
<keyword id="KW-0238">DNA-binding</keyword>
<keyword id="KW-0804">Transcription</keyword>
<keyword id="KW-0805">Transcription regulation</keyword>
<name>FLHD_ECO8A</name>
<evidence type="ECO:0000255" key="1">
    <source>
        <dbReference type="HAMAP-Rule" id="MF_00725"/>
    </source>
</evidence>
<sequence length="119" mass="13618">MGIMHTSELLKHIYDINLSYLLLAQRLIVQDKASAMFRLGINEEMATTLAALTLPQMVKLAETNQLVCHFRFDSHQTITQLTQDSRVDDLQQIHTGIMLSTRLLNDVNQPEEALRKKRA</sequence>
<gene>
    <name evidence="1" type="primary">flhD</name>
    <name type="ordered locus">ECIAI1_1979</name>
</gene>
<proteinExistence type="inferred from homology"/>
<feature type="chain" id="PRO_1000132682" description="Flagellar transcriptional regulator FlhD">
    <location>
        <begin position="1"/>
        <end position="119"/>
    </location>
</feature>
<feature type="disulfide bond" description="Interchain" evidence="1">
    <location>
        <position position="68"/>
    </location>
</feature>